<sequence>MALKCHLVLLAITLLLAQCSGSVDKKDSTTNHLDEKKTDSTEAHIVQETDALKENSYLGAEEESKEEDKKRSAAPQQPGLWGKRQKIGLWGRSADAGQPGLWGKRQSPGLWGRSADAGQPGLWGKRQNPGLWGRSADAGQPGLWGKRQNPGLWGRSADAGQPGLWGKRQNPGLWGRSADARQPGLWGKREIYALWGGKRQNPGLWGRSADPGQPGLWGKRELVGLWGGKRQNPGLWGRSAEAGQPGLWGKRQKIGLWGRSADPLQPGLWGKRQNPGLWGRSADPQQPGLWGKRQNPGLWGRSADPQQPGLWGKRQNPGLWGRSADPQQPGLWGKRQNPGLWGRSADPQQPGLWGKSPGLWGRSADPQQPGLWGKRQNPGFWGRSADPQQPGLWGKRQNPGLWGRSADPQQPGLWGKRQNPGLWGRSADPQQPGLWGKRQNPGLWGRSADPQQPGLWGKRQNPGLWGRSAGSGQLGLWGKRQSRIGLWGRSAEPPQFEDLEDLKKKSAIPQPKGQ</sequence>
<evidence type="ECO:0000255" key="1"/>
<evidence type="ECO:0000256" key="2">
    <source>
        <dbReference type="SAM" id="MobiDB-lite"/>
    </source>
</evidence>
<evidence type="ECO:0000269" key="3">
    <source>
    </source>
</evidence>
<evidence type="ECO:0000305" key="4"/>
<feature type="signal peptide" evidence="1">
    <location>
        <begin position="1"/>
        <end position="22"/>
    </location>
</feature>
<feature type="propeptide" id="PRO_0000009951" evidence="1">
    <location>
        <begin position="23"/>
        <end position="75"/>
    </location>
</feature>
<feature type="peptide" id="PRO_0000009952" description="Metamorphosin A" evidence="3">
    <location>
        <begin position="76"/>
        <end position="81"/>
    </location>
</feature>
<feature type="peptide" id="PRO_0000009953" description="LWamide IV" evidence="1">
    <location>
        <begin position="85"/>
        <end position="90"/>
    </location>
</feature>
<feature type="propeptide" id="PRO_0000009954" evidence="1">
    <location>
        <begin position="93"/>
        <end position="97"/>
    </location>
</feature>
<feature type="peptide" id="PRO_0000009955" description="LWamide III" evidence="1">
    <location>
        <begin position="98"/>
        <end position="102"/>
    </location>
</feature>
<feature type="peptide" id="PRO_0000009956" description="LWamide VII" evidence="1">
    <location>
        <begin position="106"/>
        <end position="111"/>
    </location>
</feature>
<feature type="propeptide" id="PRO_0000009957" evidence="1">
    <location>
        <begin position="114"/>
        <end position="118"/>
    </location>
</feature>
<feature type="peptide" id="PRO_0000009958" description="LWamide III" evidence="1">
    <location>
        <begin position="119"/>
        <end position="123"/>
    </location>
</feature>
<feature type="peptide" id="PRO_0000009959" description="LWamide I" evidence="1">
    <location>
        <begin position="127"/>
        <end position="132"/>
    </location>
</feature>
<feature type="propeptide" id="PRO_0000009960" evidence="1">
    <location>
        <begin position="135"/>
        <end position="139"/>
    </location>
</feature>
<feature type="peptide" id="PRO_0000009961" description="LWamide III" evidence="1">
    <location>
        <begin position="140"/>
        <end position="144"/>
    </location>
</feature>
<feature type="peptide" id="PRO_0000009962" description="LWamide I" evidence="1">
    <location>
        <begin position="148"/>
        <end position="153"/>
    </location>
</feature>
<feature type="propeptide" id="PRO_0000009963" evidence="1">
    <location>
        <begin position="156"/>
        <end position="160"/>
    </location>
</feature>
<feature type="peptide" id="PRO_0000009964" description="LWamide III" evidence="1">
    <location>
        <begin position="161"/>
        <end position="165"/>
    </location>
</feature>
<feature type="peptide" id="PRO_0000009965" description="LWamide I" evidence="1">
    <location>
        <begin position="169"/>
        <end position="174"/>
    </location>
</feature>
<feature type="propeptide" id="PRO_0000009966" evidence="1">
    <location>
        <begin position="177"/>
        <end position="181"/>
    </location>
</feature>
<feature type="peptide" id="PRO_0000009967" description="LWamide VI" evidence="1">
    <location>
        <begin position="182"/>
        <end position="186"/>
    </location>
</feature>
<feature type="propeptide" id="PRO_0000009968" evidence="1">
    <location>
        <begin position="190"/>
        <end position="199"/>
    </location>
</feature>
<feature type="peptide" id="PRO_0000009969" description="LWamide I" evidence="1">
    <location>
        <begin position="200"/>
        <end position="205"/>
    </location>
</feature>
<feature type="propeptide" id="PRO_0000009970" evidence="1">
    <location>
        <begin position="208"/>
        <end position="212"/>
    </location>
</feature>
<feature type="peptide" id="PRO_0000009971" description="LWamide III" evidence="1">
    <location>
        <begin position="213"/>
        <end position="217"/>
    </location>
</feature>
<feature type="propeptide" id="PRO_0000009972" evidence="1">
    <location>
        <begin position="221"/>
        <end position="230"/>
    </location>
</feature>
<feature type="peptide" id="PRO_0000009973" description="LWamide I" evidence="1">
    <location>
        <begin position="231"/>
        <end position="236"/>
    </location>
</feature>
<feature type="propeptide" id="PRO_0000009974" evidence="1">
    <location>
        <begin position="239"/>
        <end position="243"/>
    </location>
</feature>
<feature type="peptide" id="PRO_0000009975" description="LWamide III" evidence="1">
    <location>
        <begin position="244"/>
        <end position="248"/>
    </location>
</feature>
<feature type="peptide" id="PRO_0000009976" description="LWamide IV" evidence="1">
    <location>
        <begin position="252"/>
        <end position="257"/>
    </location>
</feature>
<feature type="propeptide" id="PRO_0000009977" evidence="1">
    <location>
        <begin position="260"/>
        <end position="264"/>
    </location>
</feature>
<feature type="peptide" id="PRO_0000009978" description="LWamide V" evidence="1">
    <location>
        <begin position="265"/>
        <end position="269"/>
    </location>
</feature>
<feature type="peptide" id="PRO_0000009979" description="LWamide I" evidence="1">
    <location>
        <begin position="273"/>
        <end position="278"/>
    </location>
</feature>
<feature type="propeptide" id="PRO_0000009980" evidence="1">
    <location>
        <begin position="281"/>
        <end position="284"/>
    </location>
</feature>
<feature type="peptide" id="PRO_0000009981" description="Metamorphosin A" evidence="3">
    <location>
        <begin position="285"/>
        <end position="290"/>
    </location>
</feature>
<feature type="peptide" id="PRO_0000009982" description="LWamide I" evidence="1">
    <location>
        <begin position="294"/>
        <end position="299"/>
    </location>
</feature>
<feature type="propeptide" id="PRO_0000009983" evidence="1">
    <location>
        <begin position="302"/>
        <end position="305"/>
    </location>
</feature>
<feature type="peptide" id="PRO_0000009984" description="Metamorphosin A" evidence="3">
    <location>
        <begin position="306"/>
        <end position="311"/>
    </location>
</feature>
<feature type="peptide" id="PRO_0000009985" description="LWamide I" evidence="1">
    <location>
        <begin position="315"/>
        <end position="320"/>
    </location>
</feature>
<feature type="propeptide" id="PRO_0000009986" evidence="1">
    <location>
        <begin position="323"/>
        <end position="326"/>
    </location>
</feature>
<feature type="peptide" id="PRO_0000009987" description="Metamorphosin A" evidence="3">
    <location>
        <begin position="327"/>
        <end position="332"/>
    </location>
</feature>
<feature type="peptide" id="PRO_0000009988" description="LWamide I" evidence="1">
    <location>
        <begin position="336"/>
        <end position="341"/>
    </location>
</feature>
<feature type="propeptide" id="PRO_0000009989" evidence="1">
    <location>
        <begin position="344"/>
        <end position="347"/>
    </location>
</feature>
<feature type="peptide" id="PRO_0000009990" description="Metamorphosin A" evidence="3">
    <location>
        <begin position="348"/>
        <end position="353"/>
    </location>
</feature>
<feature type="propeptide" id="PRO_0000009991" evidence="1">
    <location>
        <begin position="356"/>
        <end position="366"/>
    </location>
</feature>
<feature type="peptide" id="PRO_0000009992" description="Metamorphosin A" evidence="3">
    <location>
        <begin position="367"/>
        <end position="372"/>
    </location>
</feature>
<feature type="propeptide" id="PRO_0000009993" evidence="1">
    <location>
        <begin position="376"/>
        <end position="387"/>
    </location>
</feature>
<feature type="peptide" id="PRO_0000009994" description="Metamorphosin A" evidence="3">
    <location>
        <begin position="388"/>
        <end position="393"/>
    </location>
</feature>
<feature type="peptide" id="PRO_0000009995" description="LWamide I" evidence="1">
    <location>
        <begin position="397"/>
        <end position="402"/>
    </location>
</feature>
<feature type="propeptide" id="PRO_0000009996" evidence="1">
    <location>
        <begin position="405"/>
        <end position="408"/>
    </location>
</feature>
<feature type="peptide" id="PRO_0000009997" description="Metamorphosin A" evidence="3">
    <location>
        <begin position="409"/>
        <end position="414"/>
    </location>
</feature>
<feature type="peptide" id="PRO_0000009998" description="LWamide I" evidence="1">
    <location>
        <begin position="418"/>
        <end position="423"/>
    </location>
</feature>
<feature type="propeptide" id="PRO_0000009999" evidence="1">
    <location>
        <begin position="426"/>
        <end position="429"/>
    </location>
</feature>
<feature type="peptide" id="PRO_0000010000" description="Metamorphosin A" evidence="3">
    <location>
        <begin position="430"/>
        <end position="435"/>
    </location>
</feature>
<feature type="peptide" id="PRO_0000010001" description="LWamide I" evidence="1">
    <location>
        <begin position="439"/>
        <end position="444"/>
    </location>
</feature>
<feature type="propeptide" id="PRO_0000010002" evidence="1">
    <location>
        <begin position="447"/>
        <end position="450"/>
    </location>
</feature>
<feature type="peptide" id="PRO_0000010003" description="Metamorphosin A" evidence="3">
    <location>
        <begin position="451"/>
        <end position="456"/>
    </location>
</feature>
<feature type="peptide" id="PRO_0000010004" description="LWamide I" evidence="1">
    <location>
        <begin position="460"/>
        <end position="465"/>
    </location>
</feature>
<feature type="propeptide" id="PRO_0000010005" evidence="1">
    <location>
        <begin position="468"/>
        <end position="472"/>
    </location>
</feature>
<feature type="peptide" id="PRO_0000010006" description="LWamide IX" evidence="1">
    <location>
        <begin position="473"/>
        <end position="477"/>
    </location>
</feature>
<feature type="peptide" id="PRO_0000010007" description="LWamide VIII" evidence="1">
    <location>
        <begin position="481"/>
        <end position="487"/>
    </location>
</feature>
<feature type="propeptide" id="PRO_0000010008" evidence="1">
    <location>
        <begin position="490"/>
        <end position="514"/>
    </location>
</feature>
<feature type="region of interest" description="Disordered" evidence="2">
    <location>
        <begin position="23"/>
        <end position="180"/>
    </location>
</feature>
<feature type="region of interest" description="Disordered" evidence="2">
    <location>
        <begin position="258"/>
        <end position="475"/>
    </location>
</feature>
<feature type="region of interest" description="Disordered" evidence="2">
    <location>
        <begin position="489"/>
        <end position="514"/>
    </location>
</feature>
<feature type="compositionally biased region" description="Basic and acidic residues" evidence="2">
    <location>
        <begin position="23"/>
        <end position="53"/>
    </location>
</feature>
<feature type="modified residue" description="Tryptophan amide" evidence="1">
    <location>
        <position position="81"/>
    </location>
</feature>
<feature type="modified residue" description="Tryptophan amide" evidence="1">
    <location>
        <position position="90"/>
    </location>
</feature>
<feature type="modified residue" description="Tryptophan amide" evidence="1">
    <location>
        <position position="102"/>
    </location>
</feature>
<feature type="modified residue" description="Tryptophan amide" evidence="1">
    <location>
        <position position="111"/>
    </location>
</feature>
<feature type="modified residue" description="Tryptophan amide" evidence="1">
    <location>
        <position position="123"/>
    </location>
</feature>
<feature type="modified residue" description="Tryptophan amide" evidence="1">
    <location>
        <position position="132"/>
    </location>
</feature>
<feature type="modified residue" description="Tryptophan amide" evidence="1">
    <location>
        <position position="144"/>
    </location>
</feature>
<feature type="modified residue" description="Tryptophan amide" evidence="1">
    <location>
        <position position="153"/>
    </location>
</feature>
<feature type="modified residue" description="Tryptophan amide" evidence="1">
    <location>
        <position position="165"/>
    </location>
</feature>
<feature type="modified residue" description="Tryptophan amide" evidence="1">
    <location>
        <position position="174"/>
    </location>
</feature>
<feature type="modified residue" description="Tryptophan amide" evidence="1">
    <location>
        <position position="186"/>
    </location>
</feature>
<feature type="modified residue" description="Tryptophan amide" evidence="1">
    <location>
        <position position="205"/>
    </location>
</feature>
<feature type="modified residue" description="Tryptophan amide" evidence="1">
    <location>
        <position position="217"/>
    </location>
</feature>
<feature type="modified residue" description="Tryptophan amide" evidence="1">
    <location>
        <position position="236"/>
    </location>
</feature>
<feature type="modified residue" description="Tryptophan amide" evidence="1">
    <location>
        <position position="248"/>
    </location>
</feature>
<feature type="modified residue" description="Tryptophan amide" evidence="1">
    <location>
        <position position="257"/>
    </location>
</feature>
<feature type="modified residue" description="Tryptophan amide" evidence="1">
    <location>
        <position position="269"/>
    </location>
</feature>
<feature type="modified residue" description="Tryptophan amide" evidence="1">
    <location>
        <position position="278"/>
    </location>
</feature>
<feature type="modified residue" description="Tryptophan amide" evidence="1">
    <location>
        <position position="290"/>
    </location>
</feature>
<feature type="modified residue" description="Tryptophan amide" evidence="1">
    <location>
        <position position="299"/>
    </location>
</feature>
<feature type="modified residue" description="Tryptophan amide" evidence="1">
    <location>
        <position position="311"/>
    </location>
</feature>
<feature type="modified residue" description="Tryptophan amide" evidence="1">
    <location>
        <position position="320"/>
    </location>
</feature>
<feature type="modified residue" description="Tryptophan amide" evidence="1">
    <location>
        <position position="332"/>
    </location>
</feature>
<feature type="modified residue" description="Tryptophan amide" evidence="1">
    <location>
        <position position="341"/>
    </location>
</feature>
<feature type="modified residue" description="Tryptophan amide" evidence="1">
    <location>
        <position position="353"/>
    </location>
</feature>
<feature type="modified residue" description="Tryptophan amide" evidence="1">
    <location>
        <position position="372"/>
    </location>
</feature>
<feature type="modified residue" description="Tryptophan amide" evidence="1">
    <location>
        <position position="393"/>
    </location>
</feature>
<feature type="modified residue" description="Tryptophan amide" evidence="1">
    <location>
        <position position="402"/>
    </location>
</feature>
<feature type="modified residue" description="Tryptophan amide" evidence="1">
    <location>
        <position position="414"/>
    </location>
</feature>
<feature type="modified residue" description="Tryptophan amide" evidence="1">
    <location>
        <position position="423"/>
    </location>
</feature>
<feature type="modified residue" description="Tryptophan amide" evidence="1">
    <location>
        <position position="435"/>
    </location>
</feature>
<feature type="modified residue" description="Tryptophan amide" evidence="1">
    <location>
        <position position="444"/>
    </location>
</feature>
<feature type="modified residue" description="Tryptophan amide" evidence="1">
    <location>
        <position position="456"/>
    </location>
</feature>
<feature type="modified residue" description="Tryptophan amide" evidence="1">
    <location>
        <position position="465"/>
    </location>
</feature>
<feature type="modified residue" description="Tryptophan amide" evidence="1">
    <location>
        <position position="477"/>
    </location>
</feature>
<feature type="modified residue" description="Tryptophan amide" evidence="1">
    <location>
        <position position="487"/>
    </location>
</feature>
<accession>Q16992</accession>
<comment type="function">
    <text evidence="3">Metamorphosin A may be part of an internal signaling system involved in control of metamorphosis.</text>
</comment>
<comment type="subcellular location">
    <subcellularLocation>
        <location>Secreted</location>
    </subcellularLocation>
</comment>
<comment type="similarity">
    <text evidence="4">Belongs to the LWamide neuropeptide family.</text>
</comment>
<keyword id="KW-0027">Amidation</keyword>
<keyword id="KW-0165">Cleavage on pair of basic residues</keyword>
<keyword id="KW-0903">Direct protein sequencing</keyword>
<keyword id="KW-0527">Neuropeptide</keyword>
<keyword id="KW-0677">Repeat</keyword>
<keyword id="KW-0964">Secreted</keyword>
<keyword id="KW-0732">Signal</keyword>
<reference evidence="4" key="1">
    <citation type="journal article" date="1995" name="Proc. Natl. Acad. Sci. U.S.A.">
        <title>Molecular cloning of a preprohormone from sea anemones containing numerous copies of a metamorphosis-inducing neuropeptide: a likely role for dipeptidyl aminopeptidase in neuropeptide precursor processing.</title>
        <authorList>
            <person name="Leviev I."/>
            <person name="Grimmelikhuijzen C.J.P."/>
        </authorList>
    </citation>
    <scope>NUCLEOTIDE SEQUENCE [MRNA]</scope>
</reference>
<reference evidence="4" key="2">
    <citation type="journal article" date="1994" name="Dev. Biol.">
        <title>Metamorphosin A: a novel peptide controlling development of the lower metazoan Hydractinia echinata (Coelenterata, Hydrozoa).</title>
        <authorList>
            <person name="Leitz T."/>
            <person name="Morand K."/>
            <person name="Mann M."/>
        </authorList>
    </citation>
    <scope>PROTEIN SEQUENCE OF METAMORPHOSIN A</scope>
    <scope>FUNCTION</scope>
</reference>
<dbReference type="EMBL" id="U34781">
    <property type="protein sequence ID" value="AAC46998.1"/>
    <property type="molecule type" value="mRNA"/>
</dbReference>
<dbReference type="SMR" id="Q16992"/>
<dbReference type="GO" id="GO:0005576">
    <property type="term" value="C:extracellular region"/>
    <property type="evidence" value="ECO:0007669"/>
    <property type="project" value="UniProtKB-SubCell"/>
</dbReference>
<dbReference type="GO" id="GO:0007218">
    <property type="term" value="P:neuropeptide signaling pathway"/>
    <property type="evidence" value="ECO:0007669"/>
    <property type="project" value="UniProtKB-KW"/>
</dbReference>
<dbReference type="InterPro" id="IPR050938">
    <property type="entry name" value="Collagen_Structural_Proteins"/>
</dbReference>
<dbReference type="PANTHER" id="PTHR37456:SF3">
    <property type="entry name" value="COLLAGEN ALPHA-1(XXV) CHAIN"/>
    <property type="match status" value="1"/>
</dbReference>
<dbReference type="PANTHER" id="PTHR37456">
    <property type="entry name" value="SI:CH211-266K2.1"/>
    <property type="match status" value="1"/>
</dbReference>
<proteinExistence type="evidence at protein level"/>
<name>LWA_ANTEL</name>
<organism>
    <name type="scientific">Anthopleura elegantissima</name>
    <name type="common">Green aggregating anemone</name>
    <name type="synonym">Actinia elegantissima</name>
    <dbReference type="NCBI Taxonomy" id="6110"/>
    <lineage>
        <taxon>Eukaryota</taxon>
        <taxon>Metazoa</taxon>
        <taxon>Cnidaria</taxon>
        <taxon>Anthozoa</taxon>
        <taxon>Hexacorallia</taxon>
        <taxon>Actiniaria</taxon>
        <taxon>Actiniidae</taxon>
        <taxon>Anthopleura</taxon>
    </lineage>
</organism>
<protein>
    <recommendedName>
        <fullName>LWamide neuropeptides</fullName>
    </recommendedName>
    <component>
        <recommendedName>
            <fullName>LWamide I</fullName>
        </recommendedName>
    </component>
    <component>
        <recommendedName>
            <fullName>Metamorphosin A</fullName>
            <shortName>MMA</shortName>
        </recommendedName>
        <alternativeName>
            <fullName>LWamide II</fullName>
        </alternativeName>
    </component>
    <component>
        <recommendedName>
            <fullName>LWamide III</fullName>
        </recommendedName>
    </component>
    <component>
        <recommendedName>
            <fullName>LWamide IV</fullName>
        </recommendedName>
    </component>
    <component>
        <recommendedName>
            <fullName>LWamide V</fullName>
        </recommendedName>
    </component>
    <component>
        <recommendedName>
            <fullName>LWamide VI</fullName>
        </recommendedName>
    </component>
    <component>
        <recommendedName>
            <fullName>LWamide VII</fullName>
        </recommendedName>
    </component>
    <component>
        <recommendedName>
            <fullName>LWamide VIII</fullName>
        </recommendedName>
    </component>
    <component>
        <recommendedName>
            <fullName>LWamide IX</fullName>
        </recommendedName>
    </component>
</protein>